<feature type="chain" id="PRO_0000115582" description="Small ribosomal subunit protein uS15">
    <location>
        <begin position="1"/>
        <end position="89"/>
    </location>
</feature>
<sequence length="89" mass="10060">MSLNAETKAAIVAEYAQSEGDTGSPEVQVALLTASINHLQGHFANHKHDHHSRRGLLRMVSSRRKLLDYLKGKNLARYQDLIKRLGLRR</sequence>
<reference key="1">
    <citation type="journal article" date="2005" name="Proc. Natl. Acad. Sci. U.S.A.">
        <title>Complete genome sequence of Vibrio fischeri: a symbiotic bacterium with pathogenic congeners.</title>
        <authorList>
            <person name="Ruby E.G."/>
            <person name="Urbanowski M."/>
            <person name="Campbell J."/>
            <person name="Dunn A."/>
            <person name="Faini M."/>
            <person name="Gunsalus R."/>
            <person name="Lostroh P."/>
            <person name="Lupp C."/>
            <person name="McCann J."/>
            <person name="Millikan D."/>
            <person name="Schaefer A."/>
            <person name="Stabb E."/>
            <person name="Stevens A."/>
            <person name="Visick K."/>
            <person name="Whistler C."/>
            <person name="Greenberg E.P."/>
        </authorList>
    </citation>
    <scope>NUCLEOTIDE SEQUENCE [LARGE SCALE GENOMIC DNA]</scope>
    <source>
        <strain>ATCC 700601 / ES114</strain>
    </source>
</reference>
<gene>
    <name evidence="1" type="primary">rpsO</name>
    <name type="ordered locus">VF_0489</name>
</gene>
<protein>
    <recommendedName>
        <fullName evidence="1">Small ribosomal subunit protein uS15</fullName>
    </recommendedName>
    <alternativeName>
        <fullName evidence="2">30S ribosomal protein S15</fullName>
    </alternativeName>
</protein>
<keyword id="KW-1185">Reference proteome</keyword>
<keyword id="KW-0687">Ribonucleoprotein</keyword>
<keyword id="KW-0689">Ribosomal protein</keyword>
<keyword id="KW-0694">RNA-binding</keyword>
<keyword id="KW-0699">rRNA-binding</keyword>
<accession>Q5E7L2</accession>
<proteinExistence type="inferred from homology"/>
<dbReference type="EMBL" id="CP000020">
    <property type="protein sequence ID" value="AAW84984.1"/>
    <property type="molecule type" value="Genomic_DNA"/>
</dbReference>
<dbReference type="RefSeq" id="WP_005417682.1">
    <property type="nucleotide sequence ID" value="NZ_CAWLES010000001.1"/>
</dbReference>
<dbReference type="RefSeq" id="YP_203872.1">
    <property type="nucleotide sequence ID" value="NC_006840.2"/>
</dbReference>
<dbReference type="SMR" id="Q5E7L2"/>
<dbReference type="STRING" id="312309.VF_0489"/>
<dbReference type="EnsemblBacteria" id="AAW84984">
    <property type="protein sequence ID" value="AAW84984"/>
    <property type="gene ID" value="VF_0489"/>
</dbReference>
<dbReference type="GeneID" id="54163126"/>
<dbReference type="KEGG" id="vfi:VF_0489"/>
<dbReference type="PATRIC" id="fig|312309.11.peg.479"/>
<dbReference type="eggNOG" id="COG0184">
    <property type="taxonomic scope" value="Bacteria"/>
</dbReference>
<dbReference type="HOGENOM" id="CLU_148518_0_0_6"/>
<dbReference type="OrthoDB" id="9799262at2"/>
<dbReference type="Proteomes" id="UP000000537">
    <property type="component" value="Chromosome I"/>
</dbReference>
<dbReference type="GO" id="GO:0022627">
    <property type="term" value="C:cytosolic small ribosomal subunit"/>
    <property type="evidence" value="ECO:0007669"/>
    <property type="project" value="TreeGrafter"/>
</dbReference>
<dbReference type="GO" id="GO:0019843">
    <property type="term" value="F:rRNA binding"/>
    <property type="evidence" value="ECO:0007669"/>
    <property type="project" value="UniProtKB-UniRule"/>
</dbReference>
<dbReference type="GO" id="GO:0003735">
    <property type="term" value="F:structural constituent of ribosome"/>
    <property type="evidence" value="ECO:0007669"/>
    <property type="project" value="InterPro"/>
</dbReference>
<dbReference type="GO" id="GO:0006412">
    <property type="term" value="P:translation"/>
    <property type="evidence" value="ECO:0007669"/>
    <property type="project" value="UniProtKB-UniRule"/>
</dbReference>
<dbReference type="CDD" id="cd00353">
    <property type="entry name" value="Ribosomal_S15p_S13e"/>
    <property type="match status" value="1"/>
</dbReference>
<dbReference type="FunFam" id="1.10.287.10:FF:000002">
    <property type="entry name" value="30S ribosomal protein S15"/>
    <property type="match status" value="1"/>
</dbReference>
<dbReference type="Gene3D" id="6.10.250.3130">
    <property type="match status" value="1"/>
</dbReference>
<dbReference type="Gene3D" id="1.10.287.10">
    <property type="entry name" value="S15/NS1, RNA-binding"/>
    <property type="match status" value="1"/>
</dbReference>
<dbReference type="HAMAP" id="MF_01343_B">
    <property type="entry name" value="Ribosomal_uS15_B"/>
    <property type="match status" value="1"/>
</dbReference>
<dbReference type="InterPro" id="IPR000589">
    <property type="entry name" value="Ribosomal_uS15"/>
</dbReference>
<dbReference type="InterPro" id="IPR005290">
    <property type="entry name" value="Ribosomal_uS15_bac-type"/>
</dbReference>
<dbReference type="InterPro" id="IPR009068">
    <property type="entry name" value="uS15_NS1_RNA-bd_sf"/>
</dbReference>
<dbReference type="NCBIfam" id="TIGR00952">
    <property type="entry name" value="S15_bact"/>
    <property type="match status" value="1"/>
</dbReference>
<dbReference type="PANTHER" id="PTHR23321">
    <property type="entry name" value="RIBOSOMAL PROTEIN S15, BACTERIAL AND ORGANELLAR"/>
    <property type="match status" value="1"/>
</dbReference>
<dbReference type="PANTHER" id="PTHR23321:SF26">
    <property type="entry name" value="SMALL RIBOSOMAL SUBUNIT PROTEIN US15M"/>
    <property type="match status" value="1"/>
</dbReference>
<dbReference type="Pfam" id="PF00312">
    <property type="entry name" value="Ribosomal_S15"/>
    <property type="match status" value="1"/>
</dbReference>
<dbReference type="SMART" id="SM01387">
    <property type="entry name" value="Ribosomal_S15"/>
    <property type="match status" value="1"/>
</dbReference>
<dbReference type="SUPFAM" id="SSF47060">
    <property type="entry name" value="S15/NS1 RNA-binding domain"/>
    <property type="match status" value="1"/>
</dbReference>
<dbReference type="PROSITE" id="PS00362">
    <property type="entry name" value="RIBOSOMAL_S15"/>
    <property type="match status" value="1"/>
</dbReference>
<comment type="function">
    <text evidence="1">One of the primary rRNA binding proteins, it binds directly to 16S rRNA where it helps nucleate assembly of the platform of the 30S subunit by binding and bridging several RNA helices of the 16S rRNA.</text>
</comment>
<comment type="function">
    <text evidence="1">Forms an intersubunit bridge (bridge B4) with the 23S rRNA of the 50S subunit in the ribosome.</text>
</comment>
<comment type="subunit">
    <text evidence="1">Part of the 30S ribosomal subunit. Forms a bridge to the 50S subunit in the 70S ribosome, contacting the 23S rRNA.</text>
</comment>
<comment type="similarity">
    <text evidence="1">Belongs to the universal ribosomal protein uS15 family.</text>
</comment>
<organism>
    <name type="scientific">Aliivibrio fischeri (strain ATCC 700601 / ES114)</name>
    <name type="common">Vibrio fischeri</name>
    <dbReference type="NCBI Taxonomy" id="312309"/>
    <lineage>
        <taxon>Bacteria</taxon>
        <taxon>Pseudomonadati</taxon>
        <taxon>Pseudomonadota</taxon>
        <taxon>Gammaproteobacteria</taxon>
        <taxon>Vibrionales</taxon>
        <taxon>Vibrionaceae</taxon>
        <taxon>Aliivibrio</taxon>
    </lineage>
</organism>
<name>RS15_ALIF1</name>
<evidence type="ECO:0000255" key="1">
    <source>
        <dbReference type="HAMAP-Rule" id="MF_01343"/>
    </source>
</evidence>
<evidence type="ECO:0000305" key="2"/>